<reference key="1">
    <citation type="journal article" date="2005" name="Proc. Natl. Acad. Sci. U.S.A.">
        <title>Comparison of the complete genome sequences of Pseudomonas syringae pv. syringae B728a and pv. tomato DC3000.</title>
        <authorList>
            <person name="Feil H."/>
            <person name="Feil W.S."/>
            <person name="Chain P."/>
            <person name="Larimer F."/>
            <person name="Dibartolo G."/>
            <person name="Copeland A."/>
            <person name="Lykidis A."/>
            <person name="Trong S."/>
            <person name="Nolan M."/>
            <person name="Goltsman E."/>
            <person name="Thiel J."/>
            <person name="Malfatti S."/>
            <person name="Loper J.E."/>
            <person name="Lapidus A."/>
            <person name="Detter J.C."/>
            <person name="Land M."/>
            <person name="Richardson P.M."/>
            <person name="Kyrpides N.C."/>
            <person name="Ivanova N."/>
            <person name="Lindow S.E."/>
        </authorList>
    </citation>
    <scope>NUCLEOTIDE SEQUENCE [LARGE SCALE GENOMIC DNA]</scope>
    <source>
        <strain>B728a</strain>
    </source>
</reference>
<sequence>MALSVEEKAQIVTDYQQAVGDTGSPEVQVALLTANINKLQGHFKANGKDHHSRRGLIRMVNQRRKLLDYLKGKDVSRYSALIGRLGLRR</sequence>
<comment type="function">
    <text evidence="1">One of the primary rRNA binding proteins, it binds directly to 16S rRNA where it helps nucleate assembly of the platform of the 30S subunit by binding and bridging several RNA helices of the 16S rRNA.</text>
</comment>
<comment type="function">
    <text evidence="1">Forms an intersubunit bridge (bridge B4) with the 23S rRNA of the 50S subunit in the ribosome.</text>
</comment>
<comment type="subunit">
    <text evidence="1">Part of the 30S ribosomal subunit. Forms a bridge to the 50S subunit in the 70S ribosome, contacting the 23S rRNA.</text>
</comment>
<comment type="similarity">
    <text evidence="1">Belongs to the universal ribosomal protein uS15 family.</text>
</comment>
<proteinExistence type="inferred from homology"/>
<evidence type="ECO:0000255" key="1">
    <source>
        <dbReference type="HAMAP-Rule" id="MF_01343"/>
    </source>
</evidence>
<evidence type="ECO:0000305" key="2"/>
<accession>Q4ZNR5</accession>
<keyword id="KW-0687">Ribonucleoprotein</keyword>
<keyword id="KW-0689">Ribosomal protein</keyword>
<keyword id="KW-0694">RNA-binding</keyword>
<keyword id="KW-0699">rRNA-binding</keyword>
<name>RS15_PSEU2</name>
<protein>
    <recommendedName>
        <fullName evidence="1">Small ribosomal subunit protein uS15</fullName>
    </recommendedName>
    <alternativeName>
        <fullName evidence="2">30S ribosomal protein S15</fullName>
    </alternativeName>
</protein>
<dbReference type="EMBL" id="CP000075">
    <property type="protein sequence ID" value="AAY39207.1"/>
    <property type="molecule type" value="Genomic_DNA"/>
</dbReference>
<dbReference type="RefSeq" id="WP_002555121.1">
    <property type="nucleotide sequence ID" value="NC_007005.1"/>
</dbReference>
<dbReference type="RefSeq" id="YP_237245.1">
    <property type="nucleotide sequence ID" value="NC_007005.1"/>
</dbReference>
<dbReference type="SMR" id="Q4ZNR5"/>
<dbReference type="STRING" id="205918.Psyr_4177"/>
<dbReference type="GeneID" id="96220657"/>
<dbReference type="KEGG" id="psb:Psyr_4177"/>
<dbReference type="PATRIC" id="fig|205918.7.peg.4304"/>
<dbReference type="eggNOG" id="COG0184">
    <property type="taxonomic scope" value="Bacteria"/>
</dbReference>
<dbReference type="HOGENOM" id="CLU_148518_0_0_6"/>
<dbReference type="OrthoDB" id="9799262at2"/>
<dbReference type="Proteomes" id="UP000000426">
    <property type="component" value="Chromosome"/>
</dbReference>
<dbReference type="GO" id="GO:0022627">
    <property type="term" value="C:cytosolic small ribosomal subunit"/>
    <property type="evidence" value="ECO:0007669"/>
    <property type="project" value="TreeGrafter"/>
</dbReference>
<dbReference type="GO" id="GO:0019843">
    <property type="term" value="F:rRNA binding"/>
    <property type="evidence" value="ECO:0007669"/>
    <property type="project" value="UniProtKB-UniRule"/>
</dbReference>
<dbReference type="GO" id="GO:0003735">
    <property type="term" value="F:structural constituent of ribosome"/>
    <property type="evidence" value="ECO:0007669"/>
    <property type="project" value="InterPro"/>
</dbReference>
<dbReference type="GO" id="GO:0006412">
    <property type="term" value="P:translation"/>
    <property type="evidence" value="ECO:0007669"/>
    <property type="project" value="UniProtKB-UniRule"/>
</dbReference>
<dbReference type="CDD" id="cd00353">
    <property type="entry name" value="Ribosomal_S15p_S13e"/>
    <property type="match status" value="1"/>
</dbReference>
<dbReference type="FunFam" id="1.10.287.10:FF:000002">
    <property type="entry name" value="30S ribosomal protein S15"/>
    <property type="match status" value="1"/>
</dbReference>
<dbReference type="Gene3D" id="6.10.250.3130">
    <property type="match status" value="1"/>
</dbReference>
<dbReference type="Gene3D" id="1.10.287.10">
    <property type="entry name" value="S15/NS1, RNA-binding"/>
    <property type="match status" value="1"/>
</dbReference>
<dbReference type="HAMAP" id="MF_01343_B">
    <property type="entry name" value="Ribosomal_uS15_B"/>
    <property type="match status" value="1"/>
</dbReference>
<dbReference type="InterPro" id="IPR000589">
    <property type="entry name" value="Ribosomal_uS15"/>
</dbReference>
<dbReference type="InterPro" id="IPR005290">
    <property type="entry name" value="Ribosomal_uS15_bac-type"/>
</dbReference>
<dbReference type="InterPro" id="IPR009068">
    <property type="entry name" value="uS15_NS1_RNA-bd_sf"/>
</dbReference>
<dbReference type="NCBIfam" id="TIGR00952">
    <property type="entry name" value="S15_bact"/>
    <property type="match status" value="1"/>
</dbReference>
<dbReference type="PANTHER" id="PTHR23321">
    <property type="entry name" value="RIBOSOMAL PROTEIN S15, BACTERIAL AND ORGANELLAR"/>
    <property type="match status" value="1"/>
</dbReference>
<dbReference type="PANTHER" id="PTHR23321:SF26">
    <property type="entry name" value="SMALL RIBOSOMAL SUBUNIT PROTEIN US15M"/>
    <property type="match status" value="1"/>
</dbReference>
<dbReference type="Pfam" id="PF00312">
    <property type="entry name" value="Ribosomal_S15"/>
    <property type="match status" value="1"/>
</dbReference>
<dbReference type="SMART" id="SM01387">
    <property type="entry name" value="Ribosomal_S15"/>
    <property type="match status" value="1"/>
</dbReference>
<dbReference type="SUPFAM" id="SSF47060">
    <property type="entry name" value="S15/NS1 RNA-binding domain"/>
    <property type="match status" value="1"/>
</dbReference>
<dbReference type="PROSITE" id="PS00362">
    <property type="entry name" value="RIBOSOMAL_S15"/>
    <property type="match status" value="1"/>
</dbReference>
<feature type="chain" id="PRO_0000115515" description="Small ribosomal subunit protein uS15">
    <location>
        <begin position="1"/>
        <end position="89"/>
    </location>
</feature>
<organism>
    <name type="scientific">Pseudomonas syringae pv. syringae (strain B728a)</name>
    <dbReference type="NCBI Taxonomy" id="205918"/>
    <lineage>
        <taxon>Bacteria</taxon>
        <taxon>Pseudomonadati</taxon>
        <taxon>Pseudomonadota</taxon>
        <taxon>Gammaproteobacteria</taxon>
        <taxon>Pseudomonadales</taxon>
        <taxon>Pseudomonadaceae</taxon>
        <taxon>Pseudomonas</taxon>
        <taxon>Pseudomonas syringae</taxon>
    </lineage>
</organism>
<gene>
    <name evidence="1" type="primary">rpsO</name>
    <name type="ordered locus">Psyr_4177</name>
</gene>